<accession>A1E9T2</accession>
<reference key="1">
    <citation type="journal article" date="2007" name="Theor. Appl. Genet.">
        <title>Complete chloroplast genome sequences of Hordeum vulgare, Sorghum bicolor and Agrostis stolonifera, and comparative analyses with other grass genomes.</title>
        <authorList>
            <person name="Saski C."/>
            <person name="Lee S.-B."/>
            <person name="Fjellheim S."/>
            <person name="Guda C."/>
            <person name="Jansen R.K."/>
            <person name="Luo H."/>
            <person name="Tomkins J."/>
            <person name="Rognli O.A."/>
            <person name="Daniell H."/>
            <person name="Clarke J.L."/>
        </authorList>
    </citation>
    <scope>NUCLEOTIDE SEQUENCE [LARGE SCALE GENOMIC DNA]</scope>
    <source>
        <strain>cv. BTx623</strain>
    </source>
</reference>
<protein>
    <recommendedName>
        <fullName evidence="1">Ribulose bisphosphate carboxylase large chain</fullName>
        <shortName evidence="1">RuBisCO large subunit</shortName>
        <ecNumber evidence="1">4.1.1.39</ecNumber>
    </recommendedName>
</protein>
<feature type="propeptide" id="PRO_0000275369" evidence="1">
    <location>
        <begin position="1"/>
        <end position="2"/>
    </location>
</feature>
<feature type="chain" id="PRO_0000275370" description="Ribulose bisphosphate carboxylase large chain">
    <location>
        <begin position="3"/>
        <end position="476"/>
    </location>
</feature>
<feature type="active site" description="Proton acceptor" evidence="1">
    <location>
        <position position="175"/>
    </location>
</feature>
<feature type="active site" description="Proton acceptor" evidence="1">
    <location>
        <position position="294"/>
    </location>
</feature>
<feature type="binding site" description="in homodimeric partner" evidence="1">
    <location>
        <position position="123"/>
    </location>
    <ligand>
        <name>substrate</name>
    </ligand>
</feature>
<feature type="binding site" evidence="1">
    <location>
        <position position="173"/>
    </location>
    <ligand>
        <name>substrate</name>
    </ligand>
</feature>
<feature type="binding site" evidence="1">
    <location>
        <position position="177"/>
    </location>
    <ligand>
        <name>substrate</name>
    </ligand>
</feature>
<feature type="binding site" description="via carbamate group" evidence="1">
    <location>
        <position position="201"/>
    </location>
    <ligand>
        <name>Mg(2+)</name>
        <dbReference type="ChEBI" id="CHEBI:18420"/>
    </ligand>
</feature>
<feature type="binding site" evidence="1">
    <location>
        <position position="203"/>
    </location>
    <ligand>
        <name>Mg(2+)</name>
        <dbReference type="ChEBI" id="CHEBI:18420"/>
    </ligand>
</feature>
<feature type="binding site" evidence="1">
    <location>
        <position position="204"/>
    </location>
    <ligand>
        <name>Mg(2+)</name>
        <dbReference type="ChEBI" id="CHEBI:18420"/>
    </ligand>
</feature>
<feature type="binding site" evidence="1">
    <location>
        <position position="295"/>
    </location>
    <ligand>
        <name>substrate</name>
    </ligand>
</feature>
<feature type="binding site" evidence="1">
    <location>
        <position position="327"/>
    </location>
    <ligand>
        <name>substrate</name>
    </ligand>
</feature>
<feature type="binding site" evidence="1">
    <location>
        <position position="379"/>
    </location>
    <ligand>
        <name>substrate</name>
    </ligand>
</feature>
<feature type="site" description="Transition state stabilizer" evidence="1">
    <location>
        <position position="334"/>
    </location>
</feature>
<feature type="modified residue" description="N-acetylproline" evidence="1">
    <location>
        <position position="3"/>
    </location>
</feature>
<feature type="modified residue" description="N6,N6,N6-trimethyllysine" evidence="1">
    <location>
        <position position="14"/>
    </location>
</feature>
<feature type="modified residue" description="N6-carboxylysine" evidence="1">
    <location>
        <position position="201"/>
    </location>
</feature>
<feature type="disulfide bond" description="Interchain; in linked form" evidence="1">
    <location>
        <position position="247"/>
    </location>
</feature>
<geneLocation type="chloroplast"/>
<proteinExistence type="inferred from homology"/>
<gene>
    <name evidence="1" type="primary">rbcL</name>
</gene>
<organism>
    <name type="scientific">Sorghum bicolor</name>
    <name type="common">Sorghum</name>
    <name type="synonym">Sorghum vulgare</name>
    <dbReference type="NCBI Taxonomy" id="4558"/>
    <lineage>
        <taxon>Eukaryota</taxon>
        <taxon>Viridiplantae</taxon>
        <taxon>Streptophyta</taxon>
        <taxon>Embryophyta</taxon>
        <taxon>Tracheophyta</taxon>
        <taxon>Spermatophyta</taxon>
        <taxon>Magnoliopsida</taxon>
        <taxon>Liliopsida</taxon>
        <taxon>Poales</taxon>
        <taxon>Poaceae</taxon>
        <taxon>PACMAD clade</taxon>
        <taxon>Panicoideae</taxon>
        <taxon>Andropogonodae</taxon>
        <taxon>Andropogoneae</taxon>
        <taxon>Sorghinae</taxon>
        <taxon>Sorghum</taxon>
    </lineage>
</organism>
<dbReference type="EC" id="4.1.1.39" evidence="1"/>
<dbReference type="EMBL" id="EF115542">
    <property type="protein sequence ID" value="ABK79504.1"/>
    <property type="molecule type" value="Genomic_DNA"/>
</dbReference>
<dbReference type="RefSeq" id="YP_899415.1">
    <property type="nucleotide sequence ID" value="NC_008602.1"/>
</dbReference>
<dbReference type="SMR" id="A1E9T2"/>
<dbReference type="FunCoup" id="A1E9T2">
    <property type="interactions" value="465"/>
</dbReference>
<dbReference type="STRING" id="4558.A1E9T2"/>
<dbReference type="GeneID" id="4549167"/>
<dbReference type="KEGG" id="sbi:4549167"/>
<dbReference type="eggNOG" id="ENOG502QTI9">
    <property type="taxonomic scope" value="Eukaryota"/>
</dbReference>
<dbReference type="InParanoid" id="A1E9T2"/>
<dbReference type="OrthoDB" id="725602at2759"/>
<dbReference type="Proteomes" id="UP000000768">
    <property type="component" value="Chloroplast"/>
</dbReference>
<dbReference type="ExpressionAtlas" id="A1E9T2">
    <property type="expression patterns" value="baseline"/>
</dbReference>
<dbReference type="GO" id="GO:0009507">
    <property type="term" value="C:chloroplast"/>
    <property type="evidence" value="ECO:0007669"/>
    <property type="project" value="UniProtKB-SubCell"/>
</dbReference>
<dbReference type="GO" id="GO:0000287">
    <property type="term" value="F:magnesium ion binding"/>
    <property type="evidence" value="ECO:0007669"/>
    <property type="project" value="UniProtKB-UniRule"/>
</dbReference>
<dbReference type="GO" id="GO:0004497">
    <property type="term" value="F:monooxygenase activity"/>
    <property type="evidence" value="ECO:0007669"/>
    <property type="project" value="UniProtKB-KW"/>
</dbReference>
<dbReference type="GO" id="GO:0016984">
    <property type="term" value="F:ribulose-bisphosphate carboxylase activity"/>
    <property type="evidence" value="ECO:0007669"/>
    <property type="project" value="UniProtKB-UniRule"/>
</dbReference>
<dbReference type="GO" id="GO:0009853">
    <property type="term" value="P:photorespiration"/>
    <property type="evidence" value="ECO:0007669"/>
    <property type="project" value="UniProtKB-KW"/>
</dbReference>
<dbReference type="GO" id="GO:0019253">
    <property type="term" value="P:reductive pentose-phosphate cycle"/>
    <property type="evidence" value="ECO:0007669"/>
    <property type="project" value="UniProtKB-UniRule"/>
</dbReference>
<dbReference type="CDD" id="cd08212">
    <property type="entry name" value="RuBisCO_large_I"/>
    <property type="match status" value="1"/>
</dbReference>
<dbReference type="FunFam" id="3.20.20.110:FF:000001">
    <property type="entry name" value="Ribulose bisphosphate carboxylase large chain"/>
    <property type="match status" value="1"/>
</dbReference>
<dbReference type="FunFam" id="3.30.70.150:FF:000001">
    <property type="entry name" value="Ribulose bisphosphate carboxylase large chain"/>
    <property type="match status" value="1"/>
</dbReference>
<dbReference type="Gene3D" id="3.20.20.110">
    <property type="entry name" value="Ribulose bisphosphate carboxylase, large subunit, C-terminal domain"/>
    <property type="match status" value="1"/>
</dbReference>
<dbReference type="Gene3D" id="3.30.70.150">
    <property type="entry name" value="RuBisCO large subunit, N-terminal domain"/>
    <property type="match status" value="1"/>
</dbReference>
<dbReference type="HAMAP" id="MF_01338">
    <property type="entry name" value="RuBisCO_L_type1"/>
    <property type="match status" value="1"/>
</dbReference>
<dbReference type="InterPro" id="IPR033966">
    <property type="entry name" value="RuBisCO"/>
</dbReference>
<dbReference type="InterPro" id="IPR020878">
    <property type="entry name" value="RuBisCo_large_chain_AS"/>
</dbReference>
<dbReference type="InterPro" id="IPR000685">
    <property type="entry name" value="RuBisCO_lsu_C"/>
</dbReference>
<dbReference type="InterPro" id="IPR036376">
    <property type="entry name" value="RuBisCO_lsu_C_sf"/>
</dbReference>
<dbReference type="InterPro" id="IPR017443">
    <property type="entry name" value="RuBisCO_lsu_fd_N"/>
</dbReference>
<dbReference type="InterPro" id="IPR036422">
    <property type="entry name" value="RuBisCO_lsu_N_sf"/>
</dbReference>
<dbReference type="InterPro" id="IPR020888">
    <property type="entry name" value="RuBisCO_lsuI"/>
</dbReference>
<dbReference type="NCBIfam" id="NF003252">
    <property type="entry name" value="PRK04208.1"/>
    <property type="match status" value="1"/>
</dbReference>
<dbReference type="PANTHER" id="PTHR42704">
    <property type="entry name" value="RIBULOSE BISPHOSPHATE CARBOXYLASE"/>
    <property type="match status" value="1"/>
</dbReference>
<dbReference type="PANTHER" id="PTHR42704:SF20">
    <property type="entry name" value="RIBULOSE BISPHOSPHATE CARBOXYLASE LARGE CHAIN"/>
    <property type="match status" value="1"/>
</dbReference>
<dbReference type="Pfam" id="PF00016">
    <property type="entry name" value="RuBisCO_large"/>
    <property type="match status" value="1"/>
</dbReference>
<dbReference type="Pfam" id="PF02788">
    <property type="entry name" value="RuBisCO_large_N"/>
    <property type="match status" value="1"/>
</dbReference>
<dbReference type="SFLD" id="SFLDG01052">
    <property type="entry name" value="RuBisCO"/>
    <property type="match status" value="1"/>
</dbReference>
<dbReference type="SFLD" id="SFLDS00014">
    <property type="entry name" value="RuBisCO"/>
    <property type="match status" value="1"/>
</dbReference>
<dbReference type="SFLD" id="SFLDG00301">
    <property type="entry name" value="RuBisCO-like_proteins"/>
    <property type="match status" value="1"/>
</dbReference>
<dbReference type="SUPFAM" id="SSF51649">
    <property type="entry name" value="RuBisCo, C-terminal domain"/>
    <property type="match status" value="1"/>
</dbReference>
<dbReference type="SUPFAM" id="SSF54966">
    <property type="entry name" value="RuBisCO, large subunit, small (N-terminal) domain"/>
    <property type="match status" value="1"/>
</dbReference>
<dbReference type="PROSITE" id="PS00157">
    <property type="entry name" value="RUBISCO_LARGE"/>
    <property type="match status" value="1"/>
</dbReference>
<evidence type="ECO:0000255" key="1">
    <source>
        <dbReference type="HAMAP-Rule" id="MF_01338"/>
    </source>
</evidence>
<keyword id="KW-0007">Acetylation</keyword>
<keyword id="KW-0113">Calvin cycle</keyword>
<keyword id="KW-0120">Carbon dioxide fixation</keyword>
<keyword id="KW-0150">Chloroplast</keyword>
<keyword id="KW-1015">Disulfide bond</keyword>
<keyword id="KW-0456">Lyase</keyword>
<keyword id="KW-0460">Magnesium</keyword>
<keyword id="KW-0479">Metal-binding</keyword>
<keyword id="KW-0488">Methylation</keyword>
<keyword id="KW-0503">Monooxygenase</keyword>
<keyword id="KW-0560">Oxidoreductase</keyword>
<keyword id="KW-0601">Photorespiration</keyword>
<keyword id="KW-0602">Photosynthesis</keyword>
<keyword id="KW-0934">Plastid</keyword>
<keyword id="KW-1185">Reference proteome</keyword>
<sequence length="476" mass="52729">MSPQTETKASVGFKAGVKDYKLTYYTPEYETKDTDILAAFRVTPQLGVPPEEAGAAVAAESSTGTWTTVWTDGLTSLDRYKGRCYHIEPVPGDPDQYICYVAYPLDLFEEGSVTNMFTSIVGNVFGFKALRALRLEDLRIPPAYVKTFQGPPHGIQVERDKLNKYGRPLLGCTIKPKLGLSAKNYGRACYECLRGGLDFTKDDENVNSQPFMRWRDRFVFCAEAIYKAQAETGEIKGHYLNATAGTCEEMIKRAVFAKELGVPIVMHDYLTGGFTANTTLSHYCRDNGLLLHIHRAMHAVIDRQKNHGMHFRVLAKALRMSGGDHIHSGTVVGKLEGEREITLGFVDLLRDDFIEKDRSRGIFFTQDWVSMPGVIPVASGGIHVWHMPALTEIFGDDSVLQFGGGTLGHPWGNAPGAAANRVALEACVQARNEGRDLAREGNEIIKAACKWSAELAAACEIWKEIKFDTFKAMDTL</sequence>
<name>RBL_SORBI</name>
<comment type="function">
    <text evidence="1">RuBisCO catalyzes two reactions: the carboxylation of D-ribulose 1,5-bisphosphate, the primary event in carbon dioxide fixation, as well as the oxidative fragmentation of the pentose substrate in the photorespiration process. Both reactions occur simultaneously and in competition at the same active site.</text>
</comment>
<comment type="catalytic activity">
    <reaction evidence="1">
        <text>2 (2R)-3-phosphoglycerate + 2 H(+) = D-ribulose 1,5-bisphosphate + CO2 + H2O</text>
        <dbReference type="Rhea" id="RHEA:23124"/>
        <dbReference type="ChEBI" id="CHEBI:15377"/>
        <dbReference type="ChEBI" id="CHEBI:15378"/>
        <dbReference type="ChEBI" id="CHEBI:16526"/>
        <dbReference type="ChEBI" id="CHEBI:57870"/>
        <dbReference type="ChEBI" id="CHEBI:58272"/>
        <dbReference type="EC" id="4.1.1.39"/>
    </reaction>
</comment>
<comment type="catalytic activity">
    <reaction evidence="1">
        <text>D-ribulose 1,5-bisphosphate + O2 = 2-phosphoglycolate + (2R)-3-phosphoglycerate + 2 H(+)</text>
        <dbReference type="Rhea" id="RHEA:36631"/>
        <dbReference type="ChEBI" id="CHEBI:15378"/>
        <dbReference type="ChEBI" id="CHEBI:15379"/>
        <dbReference type="ChEBI" id="CHEBI:57870"/>
        <dbReference type="ChEBI" id="CHEBI:58033"/>
        <dbReference type="ChEBI" id="CHEBI:58272"/>
    </reaction>
</comment>
<comment type="cofactor">
    <cofactor evidence="1">
        <name>Mg(2+)</name>
        <dbReference type="ChEBI" id="CHEBI:18420"/>
    </cofactor>
    <text evidence="1">Binds 1 Mg(2+) ion per subunit.</text>
</comment>
<comment type="subunit">
    <text evidence="1">Heterohexadecamer of 8 large chains and 8 small chains; disulfide-linked. The disulfide link is formed within the large subunit homodimers.</text>
</comment>
<comment type="subcellular location">
    <subcellularLocation>
        <location>Plastid</location>
        <location>Chloroplast</location>
    </subcellularLocation>
</comment>
<comment type="PTM">
    <text evidence="1">The disulfide bond which can form in the large chain dimeric partners within the hexadecamer appears to be associated with oxidative stress and protein turnover.</text>
</comment>
<comment type="miscellaneous">
    <text evidence="1">The basic functional RuBisCO is composed of a large chain homodimer in a 'head-to-tail' conformation. In form I RuBisCO this homodimer is arranged in a barrel-like tetramer with the small subunits forming a tetrameric 'cap' on each end of the 'barrel'.</text>
</comment>
<comment type="similarity">
    <text evidence="1">Belongs to the RuBisCO large chain family. Type I subfamily.</text>
</comment>